<dbReference type="GO" id="GO:0005576">
    <property type="term" value="C:extracellular region"/>
    <property type="evidence" value="ECO:0007669"/>
    <property type="project" value="UniProtKB-SubCell"/>
</dbReference>
<dbReference type="GO" id="GO:0090729">
    <property type="term" value="F:toxin activity"/>
    <property type="evidence" value="ECO:0007669"/>
    <property type="project" value="UniProtKB-KW"/>
</dbReference>
<reference key="1">
    <citation type="journal article" date="2012" name="J. Proteome Res.">
        <title>Constrained de novo sequencing of conotoxins.</title>
        <authorList>
            <person name="Bhatia S."/>
            <person name="Kil Y.J."/>
            <person name="Ueberheide B."/>
            <person name="Chait B.T."/>
            <person name="Tayo L."/>
            <person name="Cruz L."/>
            <person name="Lu B."/>
            <person name="Yates J.R. III"/>
            <person name="Bern M."/>
        </authorList>
    </citation>
    <scope>PROTEIN SEQUENCE</scope>
    <scope>IDENTIFICATION BY MASS SPECTROMETRY</scope>
    <scope>SUBCELLULAR LOCATION</scope>
    <scope>AMIDATION AT CYS-9</scope>
    <source>
        <tissue>Venom</tissue>
    </source>
</reference>
<evidence type="ECO:0000269" key="1">
    <source>
    </source>
</evidence>
<evidence type="ECO:0000305" key="2"/>
<evidence type="ECO:0000305" key="3">
    <source>
    </source>
</evidence>
<organism>
    <name type="scientific">Conus textile</name>
    <name type="common">Cloth-of-gold cone</name>
    <dbReference type="NCBI Taxonomy" id="6494"/>
    <lineage>
        <taxon>Eukaryota</taxon>
        <taxon>Metazoa</taxon>
        <taxon>Spiralia</taxon>
        <taxon>Lophotrochozoa</taxon>
        <taxon>Mollusca</taxon>
        <taxon>Gastropoda</taxon>
        <taxon>Caenogastropoda</taxon>
        <taxon>Neogastropoda</taxon>
        <taxon>Conoidea</taxon>
        <taxon>Conidae</taxon>
        <taxon>Conus</taxon>
        <taxon>Cylinder</taxon>
    </lineage>
</organism>
<comment type="subcellular location">
    <subcellularLocation>
        <location evidence="1">Secreted</location>
    </subcellularLocation>
</comment>
<comment type="tissue specificity">
    <text evidence="3">Expressed by the venom duct.</text>
</comment>
<comment type="domain">
    <text evidence="2">The cysteine framework is V (CC-CC).</text>
</comment>
<comment type="PTM">
    <text evidence="2">Contains 2 disulfide bonds that can be either 'C1-C3, C2-C4' or 'C1-C4, C2-C3', since these disulfide connectivities have been observed for conotoxins with cysteine framework V (for examples, see AC P0DQQ7 and AC P81755).</text>
</comment>
<comment type="similarity">
    <text evidence="2">Belongs to the conotoxin T superfamily.</text>
</comment>
<keyword id="KW-0027">Amidation</keyword>
<keyword id="KW-0903">Direct protein sequencing</keyword>
<keyword id="KW-1015">Disulfide bond</keyword>
<keyword id="KW-0964">Secreted</keyword>
<keyword id="KW-0800">Toxin</keyword>
<sequence length="9" mass="1023">CCPPVIWCC</sequence>
<feature type="peptide" id="PRO_0000445050" description="Conotoxin tx5f" evidence="1">
    <location>
        <begin position="1"/>
        <end position="9"/>
    </location>
</feature>
<feature type="modified residue" description="Cysteine amide" evidence="1">
    <location>
        <position position="9"/>
    </location>
</feature>
<feature type="unsure residue" description="I or L" evidence="1">
    <location>
        <position position="6"/>
    </location>
</feature>
<protein>
    <recommendedName>
        <fullName evidence="2">Conotoxin tx5f</fullName>
    </recommendedName>
    <alternativeName>
        <fullName evidence="2">Conotoxin Tx5.2</fullName>
    </alternativeName>
</protein>
<proteinExistence type="evidence at protein level"/>
<accession>P0DPL4</accession>
<name>CT5F_CONTE</name>